<accession>B3QUS0</accession>
<dbReference type="EC" id="7.1.1.-" evidence="1"/>
<dbReference type="EMBL" id="CP001100">
    <property type="protein sequence ID" value="ACF14421.1"/>
    <property type="molecule type" value="Genomic_DNA"/>
</dbReference>
<dbReference type="SMR" id="B3QUS0"/>
<dbReference type="STRING" id="517418.Ctha_1967"/>
<dbReference type="KEGG" id="cts:Ctha_1967"/>
<dbReference type="eggNOG" id="COG0649">
    <property type="taxonomic scope" value="Bacteria"/>
</dbReference>
<dbReference type="HOGENOM" id="CLU_015134_1_2_10"/>
<dbReference type="OrthoDB" id="9801496at2"/>
<dbReference type="Proteomes" id="UP000001208">
    <property type="component" value="Chromosome"/>
</dbReference>
<dbReference type="GO" id="GO:0005886">
    <property type="term" value="C:plasma membrane"/>
    <property type="evidence" value="ECO:0007669"/>
    <property type="project" value="UniProtKB-SubCell"/>
</dbReference>
<dbReference type="GO" id="GO:0051287">
    <property type="term" value="F:NAD binding"/>
    <property type="evidence" value="ECO:0007669"/>
    <property type="project" value="InterPro"/>
</dbReference>
<dbReference type="GO" id="GO:0050136">
    <property type="term" value="F:NADH:ubiquinone reductase (non-electrogenic) activity"/>
    <property type="evidence" value="ECO:0007669"/>
    <property type="project" value="UniProtKB-UniRule"/>
</dbReference>
<dbReference type="GO" id="GO:0048038">
    <property type="term" value="F:quinone binding"/>
    <property type="evidence" value="ECO:0007669"/>
    <property type="project" value="UniProtKB-KW"/>
</dbReference>
<dbReference type="Gene3D" id="1.10.645.10">
    <property type="entry name" value="Cytochrome-c3 Hydrogenase, chain B"/>
    <property type="match status" value="1"/>
</dbReference>
<dbReference type="HAMAP" id="MF_01358">
    <property type="entry name" value="NDH1_NuoD"/>
    <property type="match status" value="1"/>
</dbReference>
<dbReference type="InterPro" id="IPR001135">
    <property type="entry name" value="NADH_Q_OxRdtase_suD"/>
</dbReference>
<dbReference type="InterPro" id="IPR014029">
    <property type="entry name" value="NADH_UbQ_OxRdtase_49kDa_CS"/>
</dbReference>
<dbReference type="InterPro" id="IPR022885">
    <property type="entry name" value="NDH1_su_D/H"/>
</dbReference>
<dbReference type="InterPro" id="IPR029014">
    <property type="entry name" value="NiFe-Hase_large"/>
</dbReference>
<dbReference type="NCBIfam" id="TIGR01962">
    <property type="entry name" value="NuoD"/>
    <property type="match status" value="1"/>
</dbReference>
<dbReference type="NCBIfam" id="NF004739">
    <property type="entry name" value="PRK06075.1"/>
    <property type="match status" value="1"/>
</dbReference>
<dbReference type="PANTHER" id="PTHR11993:SF10">
    <property type="entry name" value="NADH DEHYDROGENASE [UBIQUINONE] IRON-SULFUR PROTEIN 2, MITOCHONDRIAL"/>
    <property type="match status" value="1"/>
</dbReference>
<dbReference type="PANTHER" id="PTHR11993">
    <property type="entry name" value="NADH-UBIQUINONE OXIDOREDUCTASE 49 KDA SUBUNIT"/>
    <property type="match status" value="1"/>
</dbReference>
<dbReference type="Pfam" id="PF00346">
    <property type="entry name" value="Complex1_49kDa"/>
    <property type="match status" value="1"/>
</dbReference>
<dbReference type="SUPFAM" id="SSF56762">
    <property type="entry name" value="HydB/Nqo4-like"/>
    <property type="match status" value="1"/>
</dbReference>
<dbReference type="PROSITE" id="PS00535">
    <property type="entry name" value="COMPLEX1_49K"/>
    <property type="match status" value="1"/>
</dbReference>
<name>NUOD1_CHLT3</name>
<evidence type="ECO:0000255" key="1">
    <source>
        <dbReference type="HAMAP-Rule" id="MF_01358"/>
    </source>
</evidence>
<gene>
    <name evidence="1" type="primary">nuoD1</name>
    <name type="ordered locus">Ctha_1967</name>
</gene>
<feature type="chain" id="PRO_0000371851" description="NADH-quinone oxidoreductase subunit D 1">
    <location>
        <begin position="1"/>
        <end position="440"/>
    </location>
</feature>
<comment type="function">
    <text evidence="1">NDH-1 shuttles electrons from NADH, via FMN and iron-sulfur (Fe-S) centers, to quinones in the respiratory chain. The immediate electron acceptor for the enzyme in this species is believed to be a menaquinone. Couples the redox reaction to proton translocation (for every two electrons transferred, four hydrogen ions are translocated across the cytoplasmic membrane), and thus conserves the redox energy in a proton gradient.</text>
</comment>
<comment type="catalytic activity">
    <reaction evidence="1">
        <text>a quinone + NADH + 5 H(+)(in) = a quinol + NAD(+) + 4 H(+)(out)</text>
        <dbReference type="Rhea" id="RHEA:57888"/>
        <dbReference type="ChEBI" id="CHEBI:15378"/>
        <dbReference type="ChEBI" id="CHEBI:24646"/>
        <dbReference type="ChEBI" id="CHEBI:57540"/>
        <dbReference type="ChEBI" id="CHEBI:57945"/>
        <dbReference type="ChEBI" id="CHEBI:132124"/>
    </reaction>
</comment>
<comment type="subunit">
    <text evidence="1">NDH-1 is composed of 14 different subunits. Subunits NuoB, C, D, E, F, and G constitute the peripheral sector of the complex.</text>
</comment>
<comment type="subcellular location">
    <subcellularLocation>
        <location evidence="1">Cell inner membrane</location>
        <topology evidence="1">Peripheral membrane protein</topology>
        <orientation evidence="1">Cytoplasmic side</orientation>
    </subcellularLocation>
</comment>
<comment type="similarity">
    <text evidence="1">Belongs to the complex I 49 kDa subunit family.</text>
</comment>
<sequence length="440" mass="50271">MKTRDEKITVSDGLERLPEPALKSDERKMARQKIYALLEDRDATLTFEEDDPLEQTMVLNMGPQHPATHGVLRVVLKLDGERVVHAVPELGYLHRAMEKLAENKSYHEFMPYTDRLDYMSPYSNNTALCLAVEKLAEIEVPERATYIRTIACELARISSHLLSIGALVMDTGALSVFLWTFQEREKIYDIFDLLTGARFTISHCRVGGIASDLSKECAELIIRWLKQFKPKIQEWRKLLDRNRIFIERLEGVGVISKEDAIAIGLSGPNLRASGVHYDIRRDEPYLAYNDLDFEIPTFENGDSYARYQMRMLEMEESVKIIEQALRKLPKGEVRNEDAKKTFPWKDEIYHSMESLIHDFMMTDSGIQMPKGEIYHAIEAPKGELGFYIQSRGEGVPWRLKIRSPSFCNLQALPKLVEGGMIADVVIIIGSLDPVMGEADK</sequence>
<keyword id="KW-0997">Cell inner membrane</keyword>
<keyword id="KW-1003">Cell membrane</keyword>
<keyword id="KW-0472">Membrane</keyword>
<keyword id="KW-0520">NAD</keyword>
<keyword id="KW-0874">Quinone</keyword>
<keyword id="KW-1185">Reference proteome</keyword>
<keyword id="KW-1278">Translocase</keyword>
<keyword id="KW-0813">Transport</keyword>
<protein>
    <recommendedName>
        <fullName evidence="1">NADH-quinone oxidoreductase subunit D 1</fullName>
        <ecNumber evidence="1">7.1.1.-</ecNumber>
    </recommendedName>
    <alternativeName>
        <fullName evidence="1">NADH dehydrogenase I subunit D 1</fullName>
    </alternativeName>
    <alternativeName>
        <fullName evidence="1">NDH-1 subunit D 1</fullName>
    </alternativeName>
</protein>
<organism>
    <name type="scientific">Chloroherpeton thalassium (strain ATCC 35110 / GB-78)</name>
    <dbReference type="NCBI Taxonomy" id="517418"/>
    <lineage>
        <taxon>Bacteria</taxon>
        <taxon>Pseudomonadati</taxon>
        <taxon>Chlorobiota</taxon>
        <taxon>Chlorobiia</taxon>
        <taxon>Chlorobiales</taxon>
        <taxon>Chloroherpetonaceae</taxon>
        <taxon>Chloroherpeton</taxon>
    </lineage>
</organism>
<proteinExistence type="inferred from homology"/>
<reference key="1">
    <citation type="submission" date="2008-06" db="EMBL/GenBank/DDBJ databases">
        <title>Complete sequence of Chloroherpeton thalassium ATCC 35110.</title>
        <authorList>
            <consortium name="US DOE Joint Genome Institute"/>
            <person name="Lucas S."/>
            <person name="Copeland A."/>
            <person name="Lapidus A."/>
            <person name="Glavina del Rio T."/>
            <person name="Dalin E."/>
            <person name="Tice H."/>
            <person name="Bruce D."/>
            <person name="Goodwin L."/>
            <person name="Pitluck S."/>
            <person name="Schmutz J."/>
            <person name="Larimer F."/>
            <person name="Land M."/>
            <person name="Hauser L."/>
            <person name="Kyrpides N."/>
            <person name="Mikhailova N."/>
            <person name="Liu Z."/>
            <person name="Li T."/>
            <person name="Zhao F."/>
            <person name="Overmann J."/>
            <person name="Bryant D.A."/>
            <person name="Richardson P."/>
        </authorList>
    </citation>
    <scope>NUCLEOTIDE SEQUENCE [LARGE SCALE GENOMIC DNA]</scope>
    <source>
        <strain>ATCC 35110 / GB-78</strain>
    </source>
</reference>